<dbReference type="EMBL" id="CP000686">
    <property type="protein sequence ID" value="ABQ89585.1"/>
    <property type="molecule type" value="Genomic_DNA"/>
</dbReference>
<dbReference type="RefSeq" id="WP_011955938.1">
    <property type="nucleotide sequence ID" value="NC_009523.1"/>
</dbReference>
<dbReference type="SMR" id="A5USI2"/>
<dbReference type="STRING" id="357808.RoseRS_1178"/>
<dbReference type="KEGG" id="rrs:RoseRS_1178"/>
<dbReference type="eggNOG" id="COG0197">
    <property type="taxonomic scope" value="Bacteria"/>
</dbReference>
<dbReference type="HOGENOM" id="CLU_078858_2_1_0"/>
<dbReference type="OrthoDB" id="9802589at2"/>
<dbReference type="Proteomes" id="UP000006554">
    <property type="component" value="Chromosome"/>
</dbReference>
<dbReference type="GO" id="GO:0022625">
    <property type="term" value="C:cytosolic large ribosomal subunit"/>
    <property type="evidence" value="ECO:0007669"/>
    <property type="project" value="TreeGrafter"/>
</dbReference>
<dbReference type="GO" id="GO:0019843">
    <property type="term" value="F:rRNA binding"/>
    <property type="evidence" value="ECO:0007669"/>
    <property type="project" value="UniProtKB-UniRule"/>
</dbReference>
<dbReference type="GO" id="GO:0003735">
    <property type="term" value="F:structural constituent of ribosome"/>
    <property type="evidence" value="ECO:0007669"/>
    <property type="project" value="InterPro"/>
</dbReference>
<dbReference type="GO" id="GO:0000049">
    <property type="term" value="F:tRNA binding"/>
    <property type="evidence" value="ECO:0007669"/>
    <property type="project" value="UniProtKB-KW"/>
</dbReference>
<dbReference type="GO" id="GO:0006412">
    <property type="term" value="P:translation"/>
    <property type="evidence" value="ECO:0007669"/>
    <property type="project" value="UniProtKB-UniRule"/>
</dbReference>
<dbReference type="CDD" id="cd01433">
    <property type="entry name" value="Ribosomal_L16_L10e"/>
    <property type="match status" value="1"/>
</dbReference>
<dbReference type="FunFam" id="3.90.1170.10:FF:000001">
    <property type="entry name" value="50S ribosomal protein L16"/>
    <property type="match status" value="1"/>
</dbReference>
<dbReference type="Gene3D" id="3.90.1170.10">
    <property type="entry name" value="Ribosomal protein L10e/L16"/>
    <property type="match status" value="1"/>
</dbReference>
<dbReference type="HAMAP" id="MF_01342">
    <property type="entry name" value="Ribosomal_uL16"/>
    <property type="match status" value="1"/>
</dbReference>
<dbReference type="InterPro" id="IPR047873">
    <property type="entry name" value="Ribosomal_uL16"/>
</dbReference>
<dbReference type="InterPro" id="IPR000114">
    <property type="entry name" value="Ribosomal_uL16_bact-type"/>
</dbReference>
<dbReference type="InterPro" id="IPR020798">
    <property type="entry name" value="Ribosomal_uL16_CS"/>
</dbReference>
<dbReference type="InterPro" id="IPR016180">
    <property type="entry name" value="Ribosomal_uL16_dom"/>
</dbReference>
<dbReference type="InterPro" id="IPR036920">
    <property type="entry name" value="Ribosomal_uL16_sf"/>
</dbReference>
<dbReference type="NCBIfam" id="TIGR01164">
    <property type="entry name" value="rplP_bact"/>
    <property type="match status" value="1"/>
</dbReference>
<dbReference type="PANTHER" id="PTHR12220">
    <property type="entry name" value="50S/60S RIBOSOMAL PROTEIN L16"/>
    <property type="match status" value="1"/>
</dbReference>
<dbReference type="PANTHER" id="PTHR12220:SF13">
    <property type="entry name" value="LARGE RIBOSOMAL SUBUNIT PROTEIN UL16M"/>
    <property type="match status" value="1"/>
</dbReference>
<dbReference type="Pfam" id="PF00252">
    <property type="entry name" value="Ribosomal_L16"/>
    <property type="match status" value="1"/>
</dbReference>
<dbReference type="PRINTS" id="PR00060">
    <property type="entry name" value="RIBOSOMALL16"/>
</dbReference>
<dbReference type="SUPFAM" id="SSF54686">
    <property type="entry name" value="Ribosomal protein L16p/L10e"/>
    <property type="match status" value="1"/>
</dbReference>
<dbReference type="PROSITE" id="PS00586">
    <property type="entry name" value="RIBOSOMAL_L16_1"/>
    <property type="match status" value="1"/>
</dbReference>
<sequence>MLMPKRVKYRKQQRGHNRGMAHRGNTVAFGEYGLMALEATWMTSRQIEAARRAISHHVKRGGKIWIRIFPDKPVTAKPAETRMGSGKGAVDHYVAVIKPGRILFELAGVRPEVAHEALERAAQKLPIKCKIVPREDLEGAA</sequence>
<keyword id="KW-0687">Ribonucleoprotein</keyword>
<keyword id="KW-0689">Ribosomal protein</keyword>
<keyword id="KW-0694">RNA-binding</keyword>
<keyword id="KW-0699">rRNA-binding</keyword>
<keyword id="KW-0820">tRNA-binding</keyword>
<gene>
    <name evidence="1" type="primary">rplP</name>
    <name type="ordered locus">RoseRS_1178</name>
</gene>
<feature type="chain" id="PRO_1000054695" description="Large ribosomal subunit protein uL16">
    <location>
        <begin position="1"/>
        <end position="141"/>
    </location>
</feature>
<feature type="region of interest" description="Disordered" evidence="2">
    <location>
        <begin position="1"/>
        <end position="21"/>
    </location>
</feature>
<name>RL16_ROSS1</name>
<evidence type="ECO:0000255" key="1">
    <source>
        <dbReference type="HAMAP-Rule" id="MF_01342"/>
    </source>
</evidence>
<evidence type="ECO:0000256" key="2">
    <source>
        <dbReference type="SAM" id="MobiDB-lite"/>
    </source>
</evidence>
<evidence type="ECO:0000305" key="3"/>
<comment type="function">
    <text evidence="1">Binds 23S rRNA and is also seen to make contacts with the A and possibly P site tRNAs.</text>
</comment>
<comment type="subunit">
    <text evidence="1">Part of the 50S ribosomal subunit.</text>
</comment>
<comment type="similarity">
    <text evidence="1">Belongs to the universal ribosomal protein uL16 family.</text>
</comment>
<organism>
    <name type="scientific">Roseiflexus sp. (strain RS-1)</name>
    <dbReference type="NCBI Taxonomy" id="357808"/>
    <lineage>
        <taxon>Bacteria</taxon>
        <taxon>Bacillati</taxon>
        <taxon>Chloroflexota</taxon>
        <taxon>Chloroflexia</taxon>
        <taxon>Chloroflexales</taxon>
        <taxon>Roseiflexineae</taxon>
        <taxon>Roseiflexaceae</taxon>
        <taxon>Roseiflexus</taxon>
    </lineage>
</organism>
<proteinExistence type="inferred from homology"/>
<protein>
    <recommendedName>
        <fullName evidence="1">Large ribosomal subunit protein uL16</fullName>
    </recommendedName>
    <alternativeName>
        <fullName evidence="3">50S ribosomal protein L16</fullName>
    </alternativeName>
</protein>
<accession>A5USI2</accession>
<reference key="1">
    <citation type="submission" date="2007-04" db="EMBL/GenBank/DDBJ databases">
        <title>Complete sequence of Roseiflexus sp. RS-1.</title>
        <authorList>
            <consortium name="US DOE Joint Genome Institute"/>
            <person name="Copeland A."/>
            <person name="Lucas S."/>
            <person name="Lapidus A."/>
            <person name="Barry K."/>
            <person name="Detter J.C."/>
            <person name="Glavina del Rio T."/>
            <person name="Hammon N."/>
            <person name="Israni S."/>
            <person name="Dalin E."/>
            <person name="Tice H."/>
            <person name="Pitluck S."/>
            <person name="Chertkov O."/>
            <person name="Brettin T."/>
            <person name="Bruce D."/>
            <person name="Han C."/>
            <person name="Schmutz J."/>
            <person name="Larimer F."/>
            <person name="Land M."/>
            <person name="Hauser L."/>
            <person name="Kyrpides N."/>
            <person name="Mikhailova N."/>
            <person name="Bryant D.A."/>
            <person name="Richardson P."/>
        </authorList>
    </citation>
    <scope>NUCLEOTIDE SEQUENCE [LARGE SCALE GENOMIC DNA]</scope>
    <source>
        <strain>RS-1</strain>
    </source>
</reference>